<keyword id="KW-0067">ATP-binding</keyword>
<keyword id="KW-0436">Ligase</keyword>
<keyword id="KW-0479">Metal-binding</keyword>
<keyword id="KW-0547">Nucleotide-binding</keyword>
<keyword id="KW-0862">Zinc</keyword>
<dbReference type="EC" id="6.3.1.13" evidence="1"/>
<dbReference type="EMBL" id="AP009044">
    <property type="protein sequence ID" value="BAF54566.1"/>
    <property type="molecule type" value="Genomic_DNA"/>
</dbReference>
<dbReference type="RefSeq" id="WP_011897265.1">
    <property type="nucleotide sequence ID" value="NC_009342.1"/>
</dbReference>
<dbReference type="SMR" id="A4QEA0"/>
<dbReference type="KEGG" id="cgt:cgR_1574"/>
<dbReference type="HOGENOM" id="CLU_013528_0_0_11"/>
<dbReference type="PhylomeDB" id="A4QEA0"/>
<dbReference type="Proteomes" id="UP000006698">
    <property type="component" value="Chromosome"/>
</dbReference>
<dbReference type="GO" id="GO:0005829">
    <property type="term" value="C:cytosol"/>
    <property type="evidence" value="ECO:0007669"/>
    <property type="project" value="TreeGrafter"/>
</dbReference>
<dbReference type="GO" id="GO:0005524">
    <property type="term" value="F:ATP binding"/>
    <property type="evidence" value="ECO:0007669"/>
    <property type="project" value="UniProtKB-KW"/>
</dbReference>
<dbReference type="GO" id="GO:0035446">
    <property type="term" value="F:cysteine-glucosaminylinositol ligase activity"/>
    <property type="evidence" value="ECO:0007669"/>
    <property type="project" value="UniProtKB-UniRule"/>
</dbReference>
<dbReference type="GO" id="GO:0004817">
    <property type="term" value="F:cysteine-tRNA ligase activity"/>
    <property type="evidence" value="ECO:0007669"/>
    <property type="project" value="TreeGrafter"/>
</dbReference>
<dbReference type="GO" id="GO:0008270">
    <property type="term" value="F:zinc ion binding"/>
    <property type="evidence" value="ECO:0007669"/>
    <property type="project" value="UniProtKB-UniRule"/>
</dbReference>
<dbReference type="GO" id="GO:0006423">
    <property type="term" value="P:cysteinyl-tRNA aminoacylation"/>
    <property type="evidence" value="ECO:0007669"/>
    <property type="project" value="TreeGrafter"/>
</dbReference>
<dbReference type="GO" id="GO:0010125">
    <property type="term" value="P:mycothiol biosynthetic process"/>
    <property type="evidence" value="ECO:0007669"/>
    <property type="project" value="UniProtKB-UniRule"/>
</dbReference>
<dbReference type="Gene3D" id="1.20.120.640">
    <property type="entry name" value="Anticodon-binding domain of a subclass of class I aminoacyl-tRNA synthetases"/>
    <property type="match status" value="1"/>
</dbReference>
<dbReference type="Gene3D" id="3.40.50.620">
    <property type="entry name" value="HUPs"/>
    <property type="match status" value="1"/>
</dbReference>
<dbReference type="HAMAP" id="MF_01697">
    <property type="entry name" value="MshC"/>
    <property type="match status" value="1"/>
</dbReference>
<dbReference type="InterPro" id="IPR024909">
    <property type="entry name" value="Cys-tRNA/MSH_ligase"/>
</dbReference>
<dbReference type="InterPro" id="IPR017812">
    <property type="entry name" value="Mycothiol_ligase_MshC"/>
</dbReference>
<dbReference type="InterPro" id="IPR014729">
    <property type="entry name" value="Rossmann-like_a/b/a_fold"/>
</dbReference>
<dbReference type="InterPro" id="IPR032678">
    <property type="entry name" value="tRNA-synt_1_cat_dom"/>
</dbReference>
<dbReference type="NCBIfam" id="TIGR03447">
    <property type="entry name" value="mycothiol_MshC"/>
    <property type="match status" value="1"/>
</dbReference>
<dbReference type="PANTHER" id="PTHR10890:SF3">
    <property type="entry name" value="CYSTEINE--TRNA LIGASE, CYTOPLASMIC"/>
    <property type="match status" value="1"/>
</dbReference>
<dbReference type="PANTHER" id="PTHR10890">
    <property type="entry name" value="CYSTEINYL-TRNA SYNTHETASE"/>
    <property type="match status" value="1"/>
</dbReference>
<dbReference type="Pfam" id="PF01406">
    <property type="entry name" value="tRNA-synt_1e"/>
    <property type="match status" value="1"/>
</dbReference>
<dbReference type="PRINTS" id="PR00983">
    <property type="entry name" value="TRNASYNTHCYS"/>
</dbReference>
<dbReference type="SUPFAM" id="SSF52374">
    <property type="entry name" value="Nucleotidylyl transferase"/>
    <property type="match status" value="1"/>
</dbReference>
<comment type="function">
    <text evidence="1">Catalyzes the ATP-dependent condensation of GlcN-Ins and L-cysteine to form L-Cys-GlcN-Ins.</text>
</comment>
<comment type="catalytic activity">
    <reaction evidence="1">
        <text>1D-myo-inositol 2-amino-2-deoxy-alpha-D-glucopyranoside + L-cysteine + ATP = 1D-myo-inositol 2-(L-cysteinylamino)-2-deoxy-alpha-D-glucopyranoside + AMP + diphosphate + H(+)</text>
        <dbReference type="Rhea" id="RHEA:26176"/>
        <dbReference type="ChEBI" id="CHEBI:15378"/>
        <dbReference type="ChEBI" id="CHEBI:30616"/>
        <dbReference type="ChEBI" id="CHEBI:33019"/>
        <dbReference type="ChEBI" id="CHEBI:35235"/>
        <dbReference type="ChEBI" id="CHEBI:58886"/>
        <dbReference type="ChEBI" id="CHEBI:58887"/>
        <dbReference type="ChEBI" id="CHEBI:456215"/>
        <dbReference type="EC" id="6.3.1.13"/>
    </reaction>
</comment>
<comment type="cofactor">
    <cofactor evidence="1">
        <name>Zn(2+)</name>
        <dbReference type="ChEBI" id="CHEBI:29105"/>
    </cofactor>
    <text evidence="1">Binds 1 zinc ion per subunit.</text>
</comment>
<comment type="subunit">
    <text evidence="1">Monomer.</text>
</comment>
<comment type="similarity">
    <text evidence="1">Belongs to the class-I aminoacyl-tRNA synthetase family. MshC subfamily.</text>
</comment>
<organism>
    <name type="scientific">Corynebacterium glutamicum (strain R)</name>
    <dbReference type="NCBI Taxonomy" id="340322"/>
    <lineage>
        <taxon>Bacteria</taxon>
        <taxon>Bacillati</taxon>
        <taxon>Actinomycetota</taxon>
        <taxon>Actinomycetes</taxon>
        <taxon>Mycobacteriales</taxon>
        <taxon>Corynebacteriaceae</taxon>
        <taxon>Corynebacterium</taxon>
    </lineage>
</organism>
<evidence type="ECO:0000255" key="1">
    <source>
        <dbReference type="HAMAP-Rule" id="MF_01697"/>
    </source>
</evidence>
<gene>
    <name evidence="1" type="primary">mshC</name>
    <name type="ordered locus">cgR_1574</name>
</gene>
<proteinExistence type="inferred from homology"/>
<reference key="1">
    <citation type="journal article" date="2007" name="Microbiology">
        <title>Comparative analysis of the Corynebacterium glutamicum group and complete genome sequence of strain R.</title>
        <authorList>
            <person name="Yukawa H."/>
            <person name="Omumasaba C.A."/>
            <person name="Nonaka H."/>
            <person name="Kos P."/>
            <person name="Okai N."/>
            <person name="Suzuki N."/>
            <person name="Suda M."/>
            <person name="Tsuge Y."/>
            <person name="Watanabe J."/>
            <person name="Ikeda Y."/>
            <person name="Vertes A.A."/>
            <person name="Inui M."/>
        </authorList>
    </citation>
    <scope>NUCLEOTIDE SEQUENCE [LARGE SCALE GENOMIC DNA]</scope>
    <source>
        <strain>R</strain>
    </source>
</reference>
<name>MSHC_CORGB</name>
<protein>
    <recommendedName>
        <fullName evidence="1">L-cysteine:1D-myo-inositol 2-amino-2-deoxy-alpha-D-glucopyranoside ligase</fullName>
        <shortName evidence="1">L-Cys:GlcN-Ins ligase</shortName>
        <ecNumber evidence="1">6.3.1.13</ecNumber>
    </recommendedName>
    <alternativeName>
        <fullName evidence="1">Mycothiol ligase</fullName>
        <shortName evidence="1">MSH ligase</shortName>
    </alternativeName>
</protein>
<feature type="chain" id="PRO_0000400438" description="L-cysteine:1D-myo-inositol 2-amino-2-deoxy-alpha-D-glucopyranoside ligase">
    <location>
        <begin position="1"/>
        <end position="420"/>
    </location>
</feature>
<feature type="short sequence motif" description="'HIGH' region" evidence="1">
    <location>
        <begin position="50"/>
        <end position="60"/>
    </location>
</feature>
<feature type="short sequence motif" description="'ERGGDP' region" evidence="1">
    <location>
        <begin position="192"/>
        <end position="197"/>
    </location>
</feature>
<feature type="short sequence motif" description="'KMSKS' region" evidence="1">
    <location>
        <begin position="294"/>
        <end position="298"/>
    </location>
</feature>
<feature type="binding site" evidence="1">
    <location>
        <begin position="48"/>
        <end position="51"/>
    </location>
    <ligand>
        <name>L-cysteinyl-5'-AMP</name>
        <dbReference type="ChEBI" id="CHEBI:144924"/>
    </ligand>
</feature>
<feature type="binding site" evidence="1">
    <location>
        <position position="48"/>
    </location>
    <ligand>
        <name>Zn(2+)</name>
        <dbReference type="ChEBI" id="CHEBI:29105"/>
    </ligand>
</feature>
<feature type="binding site" evidence="1">
    <location>
        <position position="63"/>
    </location>
    <ligand>
        <name>L-cysteinyl-5'-AMP</name>
        <dbReference type="ChEBI" id="CHEBI:144924"/>
    </ligand>
</feature>
<feature type="binding site" evidence="1">
    <location>
        <begin position="86"/>
        <end position="88"/>
    </location>
    <ligand>
        <name>L-cysteinyl-5'-AMP</name>
        <dbReference type="ChEBI" id="CHEBI:144924"/>
    </ligand>
</feature>
<feature type="binding site" evidence="1">
    <location>
        <position position="232"/>
    </location>
    <ligand>
        <name>L-cysteinyl-5'-AMP</name>
        <dbReference type="ChEBI" id="CHEBI:144924"/>
    </ligand>
</feature>
<feature type="binding site" evidence="1">
    <location>
        <position position="236"/>
    </location>
    <ligand>
        <name>Zn(2+)</name>
        <dbReference type="ChEBI" id="CHEBI:29105"/>
    </ligand>
</feature>
<feature type="binding site" evidence="1">
    <location>
        <begin position="254"/>
        <end position="256"/>
    </location>
    <ligand>
        <name>L-cysteinyl-5'-AMP</name>
        <dbReference type="ChEBI" id="CHEBI:144924"/>
    </ligand>
</feature>
<feature type="binding site" evidence="1">
    <location>
        <position position="261"/>
    </location>
    <ligand>
        <name>Zn(2+)</name>
        <dbReference type="ChEBI" id="CHEBI:29105"/>
    </ligand>
</feature>
<feature type="binding site" evidence="1">
    <location>
        <position position="288"/>
    </location>
    <ligand>
        <name>L-cysteinyl-5'-AMP</name>
        <dbReference type="ChEBI" id="CHEBI:144924"/>
    </ligand>
</feature>
<accession>A4QEA0</accession>
<sequence length="420" mass="45645">MQSWPTPEVPALAGTPVPLELFDTADQEVRLVETPPAGSDTPVGMYVCGITPYDSTHLGHAATYLAFDLIYRILLDNDHDVHYVQNITDVDDPLFERAARDGVDWRDLGTSQINLFRSDMEALSIIPPKDYIGAIESIDEVIEMVKTLLDEGAAYIVEDAEYPDVYASINATDKFGYESNYDAATMAEFFAERGGDPDRPGKKNPMDALLWRAAREGEPSWESPFGAGRPGWHIECSAIATNRLGHSFDIQGGGSDLIFPHHEFSAAHAEAAHGVERMAKHYVHAGMISQDGVKMSKSLGNLEFVSRLTAAGHEPGAIRLGVFANHYRGNRDWNAESLATAEQRLATWREAARAATNREDAIAVVEQLRAHLSADLDTPGALAAVDNWAAGIDTTAGSKEFTEVGNIVVAAIDALLGVQL</sequence>